<feature type="chain" id="PRO_0000116986" description="Adenosylhomocysteinase">
    <location>
        <begin position="1"/>
        <end position="462"/>
    </location>
</feature>
<feature type="binding site" evidence="1">
    <location>
        <position position="55"/>
    </location>
    <ligand>
        <name>substrate</name>
    </ligand>
</feature>
<feature type="binding site" evidence="1">
    <location>
        <position position="128"/>
    </location>
    <ligand>
        <name>substrate</name>
    </ligand>
</feature>
<feature type="binding site" evidence="1">
    <location>
        <position position="188"/>
    </location>
    <ligand>
        <name>substrate</name>
    </ligand>
</feature>
<feature type="binding site" evidence="1">
    <location>
        <begin position="189"/>
        <end position="191"/>
    </location>
    <ligand>
        <name>NAD(+)</name>
        <dbReference type="ChEBI" id="CHEBI:57540"/>
    </ligand>
</feature>
<feature type="binding site" evidence="1">
    <location>
        <position position="218"/>
    </location>
    <ligand>
        <name>substrate</name>
    </ligand>
</feature>
<feature type="binding site" evidence="1">
    <location>
        <position position="222"/>
    </location>
    <ligand>
        <name>substrate</name>
    </ligand>
</feature>
<feature type="binding site" evidence="1">
    <location>
        <position position="223"/>
    </location>
    <ligand>
        <name>NAD(+)</name>
        <dbReference type="ChEBI" id="CHEBI:57540"/>
    </ligand>
</feature>
<feature type="binding site" evidence="1">
    <location>
        <begin position="252"/>
        <end position="257"/>
    </location>
    <ligand>
        <name>NAD(+)</name>
        <dbReference type="ChEBI" id="CHEBI:57540"/>
    </ligand>
</feature>
<feature type="binding site" evidence="1">
    <location>
        <position position="275"/>
    </location>
    <ligand>
        <name>NAD(+)</name>
        <dbReference type="ChEBI" id="CHEBI:57540"/>
    </ligand>
</feature>
<feature type="binding site" evidence="1">
    <location>
        <position position="310"/>
    </location>
    <ligand>
        <name>NAD(+)</name>
        <dbReference type="ChEBI" id="CHEBI:57540"/>
    </ligand>
</feature>
<feature type="binding site" evidence="1">
    <location>
        <begin position="331"/>
        <end position="333"/>
    </location>
    <ligand>
        <name>NAD(+)</name>
        <dbReference type="ChEBI" id="CHEBI:57540"/>
    </ligand>
</feature>
<feature type="binding site" evidence="1">
    <location>
        <position position="376"/>
    </location>
    <ligand>
        <name>NAD(+)</name>
        <dbReference type="ChEBI" id="CHEBI:57540"/>
    </ligand>
</feature>
<protein>
    <recommendedName>
        <fullName evidence="1">Adenosylhomocysteinase</fullName>
        <ecNumber evidence="1">3.13.2.1</ecNumber>
    </recommendedName>
    <alternativeName>
        <fullName evidence="1">S-adenosyl-L-homocysteine hydrolase</fullName>
        <shortName evidence="1">AdoHcyase</shortName>
    </alternativeName>
</protein>
<reference key="1">
    <citation type="journal article" date="1999" name="J. Gen. Appl. Microbiol.">
        <title>Photosynthetic regulatory gene cluster in an aerobic photosynthetic bacterium, Roseobacter denitrificans.</title>
        <authorList>
            <person name="Nishimura K."/>
            <person name="Shinmen T."/>
            <person name="Obayashi T."/>
            <person name="Masuda T."/>
            <person name="Ohta H."/>
            <person name="Takamiya K."/>
        </authorList>
    </citation>
    <scope>NUCLEOTIDE SEQUENCE [GENOMIC DNA]</scope>
</reference>
<reference key="2">
    <citation type="journal article" date="2007" name="J. Bacteriol.">
        <title>The complete genome sequence of Roseobacter denitrificans reveals a mixotrophic rather than photosynthetic metabolism.</title>
        <authorList>
            <person name="Swingley W.D."/>
            <person name="Sadekar S."/>
            <person name="Mastrian S.D."/>
            <person name="Matthies H.J."/>
            <person name="Hao J."/>
            <person name="Ramos H."/>
            <person name="Acharya C.R."/>
            <person name="Conrad A.L."/>
            <person name="Taylor H.L."/>
            <person name="Dejesa L.C."/>
            <person name="Shah M.K."/>
            <person name="O'Huallachain M.E."/>
            <person name="Lince M.T."/>
            <person name="Blankenship R.E."/>
            <person name="Beatty J.T."/>
            <person name="Touchman J.W."/>
        </authorList>
    </citation>
    <scope>NUCLEOTIDE SEQUENCE [LARGE SCALE GENOMIC DNA]</scope>
    <source>
        <strain>ATCC 33942 / OCh 114</strain>
    </source>
</reference>
<keyword id="KW-0963">Cytoplasm</keyword>
<keyword id="KW-0378">Hydrolase</keyword>
<keyword id="KW-0520">NAD</keyword>
<keyword id="KW-0554">One-carbon metabolism</keyword>
<keyword id="KW-1185">Reference proteome</keyword>
<proteinExistence type="inferred from homology"/>
<comment type="function">
    <text evidence="1">May play a key role in the regulation of the intracellular concentration of adenosylhomocysteine.</text>
</comment>
<comment type="catalytic activity">
    <reaction evidence="1">
        <text>S-adenosyl-L-homocysteine + H2O = L-homocysteine + adenosine</text>
        <dbReference type="Rhea" id="RHEA:21708"/>
        <dbReference type="ChEBI" id="CHEBI:15377"/>
        <dbReference type="ChEBI" id="CHEBI:16335"/>
        <dbReference type="ChEBI" id="CHEBI:57856"/>
        <dbReference type="ChEBI" id="CHEBI:58199"/>
        <dbReference type="EC" id="3.13.2.1"/>
    </reaction>
</comment>
<comment type="cofactor">
    <cofactor evidence="1">
        <name>NAD(+)</name>
        <dbReference type="ChEBI" id="CHEBI:57540"/>
    </cofactor>
    <text evidence="1">Binds 1 NAD(+) per subunit.</text>
</comment>
<comment type="pathway">
    <text evidence="1">Amino-acid biosynthesis; L-homocysteine biosynthesis; L-homocysteine from S-adenosyl-L-homocysteine: step 1/1.</text>
</comment>
<comment type="subcellular location">
    <subcellularLocation>
        <location evidence="1">Cytoplasm</location>
    </subcellularLocation>
</comment>
<comment type="similarity">
    <text evidence="1">Belongs to the adenosylhomocysteinase family.</text>
</comment>
<evidence type="ECO:0000255" key="1">
    <source>
        <dbReference type="HAMAP-Rule" id="MF_00563"/>
    </source>
</evidence>
<gene>
    <name evidence="1" type="primary">ahcY</name>
    <name type="ordered locus">RD1_0465</name>
</gene>
<dbReference type="EC" id="3.13.2.1" evidence="1"/>
<dbReference type="EMBL" id="AB020211">
    <property type="protein sequence ID" value="BAA34645.1"/>
    <property type="molecule type" value="Genomic_DNA"/>
</dbReference>
<dbReference type="EMBL" id="CP000362">
    <property type="protein sequence ID" value="ABG30175.1"/>
    <property type="molecule type" value="Genomic_DNA"/>
</dbReference>
<dbReference type="RefSeq" id="WP_011566797.1">
    <property type="nucleotide sequence ID" value="NC_008209.1"/>
</dbReference>
<dbReference type="SMR" id="Q9ZNA5"/>
<dbReference type="STRING" id="375451.RD1_0465"/>
<dbReference type="KEGG" id="rde:RD1_0465"/>
<dbReference type="eggNOG" id="COG0499">
    <property type="taxonomic scope" value="Bacteria"/>
</dbReference>
<dbReference type="HOGENOM" id="CLU_025194_2_1_5"/>
<dbReference type="OrthoDB" id="9802717at2"/>
<dbReference type="UniPathway" id="UPA00314">
    <property type="reaction ID" value="UER00076"/>
</dbReference>
<dbReference type="Proteomes" id="UP000007029">
    <property type="component" value="Chromosome"/>
</dbReference>
<dbReference type="GO" id="GO:0005829">
    <property type="term" value="C:cytosol"/>
    <property type="evidence" value="ECO:0007669"/>
    <property type="project" value="TreeGrafter"/>
</dbReference>
<dbReference type="GO" id="GO:0004013">
    <property type="term" value="F:adenosylhomocysteinase activity"/>
    <property type="evidence" value="ECO:0007669"/>
    <property type="project" value="UniProtKB-UniRule"/>
</dbReference>
<dbReference type="GO" id="GO:0071269">
    <property type="term" value="P:L-homocysteine biosynthetic process"/>
    <property type="evidence" value="ECO:0007669"/>
    <property type="project" value="UniProtKB-UniRule"/>
</dbReference>
<dbReference type="GO" id="GO:0006730">
    <property type="term" value="P:one-carbon metabolic process"/>
    <property type="evidence" value="ECO:0007669"/>
    <property type="project" value="UniProtKB-KW"/>
</dbReference>
<dbReference type="GO" id="GO:0033353">
    <property type="term" value="P:S-adenosylmethionine cycle"/>
    <property type="evidence" value="ECO:0007669"/>
    <property type="project" value="TreeGrafter"/>
</dbReference>
<dbReference type="CDD" id="cd00401">
    <property type="entry name" value="SAHH"/>
    <property type="match status" value="1"/>
</dbReference>
<dbReference type="FunFam" id="3.40.50.720:FF:000004">
    <property type="entry name" value="Adenosylhomocysteinase"/>
    <property type="match status" value="1"/>
</dbReference>
<dbReference type="Gene3D" id="3.40.50.1480">
    <property type="entry name" value="Adenosylhomocysteinase-like"/>
    <property type="match status" value="1"/>
</dbReference>
<dbReference type="Gene3D" id="3.40.50.720">
    <property type="entry name" value="NAD(P)-binding Rossmann-like Domain"/>
    <property type="match status" value="1"/>
</dbReference>
<dbReference type="HAMAP" id="MF_00563">
    <property type="entry name" value="AdoHcyase"/>
    <property type="match status" value="1"/>
</dbReference>
<dbReference type="InterPro" id="IPR042172">
    <property type="entry name" value="Adenosylhomocyst_ase-like_sf"/>
</dbReference>
<dbReference type="InterPro" id="IPR000043">
    <property type="entry name" value="Adenosylhomocysteinase-like"/>
</dbReference>
<dbReference type="InterPro" id="IPR015878">
    <property type="entry name" value="Ado_hCys_hydrolase_NAD-bd"/>
</dbReference>
<dbReference type="InterPro" id="IPR036291">
    <property type="entry name" value="NAD(P)-bd_dom_sf"/>
</dbReference>
<dbReference type="InterPro" id="IPR020082">
    <property type="entry name" value="S-Ado-L-homoCys_hydrolase_CS"/>
</dbReference>
<dbReference type="NCBIfam" id="TIGR00936">
    <property type="entry name" value="ahcY"/>
    <property type="match status" value="1"/>
</dbReference>
<dbReference type="NCBIfam" id="NF004005">
    <property type="entry name" value="PRK05476.2-3"/>
    <property type="match status" value="1"/>
</dbReference>
<dbReference type="PANTHER" id="PTHR23420">
    <property type="entry name" value="ADENOSYLHOMOCYSTEINASE"/>
    <property type="match status" value="1"/>
</dbReference>
<dbReference type="PANTHER" id="PTHR23420:SF0">
    <property type="entry name" value="ADENOSYLHOMOCYSTEINASE"/>
    <property type="match status" value="1"/>
</dbReference>
<dbReference type="Pfam" id="PF05221">
    <property type="entry name" value="AdoHcyase"/>
    <property type="match status" value="1"/>
</dbReference>
<dbReference type="Pfam" id="PF00670">
    <property type="entry name" value="AdoHcyase_NAD"/>
    <property type="match status" value="1"/>
</dbReference>
<dbReference type="PIRSF" id="PIRSF001109">
    <property type="entry name" value="Ad_hcy_hydrolase"/>
    <property type="match status" value="1"/>
</dbReference>
<dbReference type="SMART" id="SM00996">
    <property type="entry name" value="AdoHcyase"/>
    <property type="match status" value="1"/>
</dbReference>
<dbReference type="SMART" id="SM00997">
    <property type="entry name" value="AdoHcyase_NAD"/>
    <property type="match status" value="1"/>
</dbReference>
<dbReference type="SUPFAM" id="SSF52283">
    <property type="entry name" value="Formate/glycerate dehydrogenase catalytic domain-like"/>
    <property type="match status" value="1"/>
</dbReference>
<dbReference type="SUPFAM" id="SSF51735">
    <property type="entry name" value="NAD(P)-binding Rossmann-fold domains"/>
    <property type="match status" value="1"/>
</dbReference>
<dbReference type="PROSITE" id="PS00738">
    <property type="entry name" value="ADOHCYASE_1"/>
    <property type="match status" value="1"/>
</dbReference>
<dbReference type="PROSITE" id="PS00739">
    <property type="entry name" value="ADOHCYASE_2"/>
    <property type="match status" value="1"/>
</dbReference>
<accession>Q9ZNA5</accession>
<accession>Q16CW8</accession>
<organism>
    <name type="scientific">Roseobacter denitrificans (strain ATCC 33942 / OCh 114)</name>
    <name type="common">Erythrobacter sp. (strain OCh 114)</name>
    <name type="synonym">Roseobacter denitrificans</name>
    <dbReference type="NCBI Taxonomy" id="375451"/>
    <lineage>
        <taxon>Bacteria</taxon>
        <taxon>Pseudomonadati</taxon>
        <taxon>Pseudomonadota</taxon>
        <taxon>Alphaproteobacteria</taxon>
        <taxon>Rhodobacterales</taxon>
        <taxon>Roseobacteraceae</taxon>
        <taxon>Roseobacter</taxon>
    </lineage>
</organism>
<sequence length="462" mass="50485">MTKDFIVKDIALAEFGRKELDIAETEMPGLMALRAEYGDSKPLAGARIVGSLHMTIQTAVLIETLVALGADVRWASCNIFSTQDHAAAAIAAGGTPVFAIKGQSLEEHWDYLDRSFMFEDGPNLILDDGGDATLYVLLGARAEAGEEIIPVPTSEEEEAIKAQIKKRMAASPGWFTKVRDQIKGVSEETTTGVHRLYDLVKQGQLPFPAINVNDSVTKSKFDNKYGCKESLVDGIRRATDTMMAGKVAVVMGYGDVGKGSAASLRGAGARVKVTEVDPICALQAAMDGFEVVLLEDVVGSADIFITTTGNKDVIRIEHMRAMKDMAIVGNIGHFDNEIQVAALKNHKWTNIKEQVDMIEMPNGNRLILLSEGRLLNLGNATGHPSFVMSASFTNQVLAQIELWTRADAYDNEVYILPKHLDEKVARLHLDRIGVKLTPLDPEQAAYIGVKPEGPFKPEHYRY</sequence>
<name>SAHH_ROSDO</name>